<comment type="interaction">
    <interactant intactId="EBI-744052">
        <id>Q5T681</id>
    </interactant>
    <interactant intactId="EBI-740459">
        <id>P51116</id>
        <label>FXR2</label>
    </interactant>
    <organismsDiffer>false</organismsDiffer>
    <experiments>4</experiments>
</comment>
<comment type="interaction">
    <interactant intactId="EBI-744052">
        <id>Q5T681</id>
    </interactant>
    <interactant intactId="EBI-10171697">
        <id>Q6A162</id>
        <label>KRT40</label>
    </interactant>
    <organismsDiffer>false</organismsDiffer>
    <experiments>3</experiments>
</comment>
<comment type="interaction">
    <interactant intactId="EBI-744052">
        <id>Q5T681</id>
    </interactant>
    <interactant intactId="EBI-11959885">
        <id>Q07627</id>
        <label>KRTAP1-1</label>
    </interactant>
    <organismsDiffer>false</organismsDiffer>
    <experiments>3</experiments>
</comment>
<comment type="interaction">
    <interactant intactId="EBI-744052">
        <id>Q5T681</id>
    </interactant>
    <interactant intactId="EBI-10171774">
        <id>P60410</id>
        <label>KRTAP10-8</label>
    </interactant>
    <organismsDiffer>false</organismsDiffer>
    <experiments>3</experiments>
</comment>
<comment type="interaction">
    <interactant intactId="EBI-744052">
        <id>Q5T681</id>
    </interactant>
    <interactant intactId="EBI-10172052">
        <id>P60411</id>
        <label>KRTAP10-9</label>
    </interactant>
    <organismsDiffer>false</organismsDiffer>
    <experiments>3</experiments>
</comment>
<comment type="interaction">
    <interactant intactId="EBI-744052">
        <id>Q5T681</id>
    </interactant>
    <interactant intactId="EBI-3958099">
        <id>P26371</id>
        <label>KRTAP5-9</label>
    </interactant>
    <organismsDiffer>false</organismsDiffer>
    <experiments>3</experiments>
</comment>
<comment type="interaction">
    <interactant intactId="EBI-744052">
        <id>Q5T681</id>
    </interactant>
    <interactant intactId="EBI-724076">
        <id>Q99750</id>
        <label>MDFI</label>
    </interactant>
    <organismsDiffer>false</organismsDiffer>
    <experiments>7</experiments>
</comment>
<comment type="interaction">
    <interactant intactId="EBI-744052">
        <id>Q5T681</id>
    </interactant>
    <interactant intactId="EBI-357275">
        <id>Q99471</id>
        <label>PFDN5</label>
    </interactant>
    <organismsDiffer>false</organismsDiffer>
    <experiments>3</experiments>
</comment>
<comment type="interaction">
    <interactant intactId="EBI-744052">
        <id>Q5T681</id>
    </interactant>
    <interactant intactId="EBI-357631">
        <id>Q13114</id>
        <label>TRAF3</label>
    </interactant>
    <organismsDiffer>false</organismsDiffer>
    <experiments>3</experiments>
</comment>
<feature type="chain" id="PRO_0000274241" description="Uncharacterized protein C10orf62">
    <location>
        <begin position="1"/>
        <end position="223"/>
    </location>
</feature>
<feature type="region of interest" description="Disordered" evidence="2">
    <location>
        <begin position="1"/>
        <end position="37"/>
    </location>
</feature>
<feature type="region of interest" description="Disordered" evidence="2">
    <location>
        <begin position="49"/>
        <end position="73"/>
    </location>
</feature>
<feature type="region of interest" description="Disordered" evidence="2">
    <location>
        <begin position="196"/>
        <end position="223"/>
    </location>
</feature>
<feature type="compositionally biased region" description="Basic residues" evidence="2">
    <location>
        <begin position="1"/>
        <end position="11"/>
    </location>
</feature>
<feature type="compositionally biased region" description="Basic and acidic residues" evidence="2">
    <location>
        <begin position="12"/>
        <end position="37"/>
    </location>
</feature>
<feature type="compositionally biased region" description="Polar residues" evidence="2">
    <location>
        <begin position="51"/>
        <end position="61"/>
    </location>
</feature>
<feature type="compositionally biased region" description="Low complexity" evidence="2">
    <location>
        <begin position="62"/>
        <end position="73"/>
    </location>
</feature>
<feature type="compositionally biased region" description="Basic residues" evidence="2">
    <location>
        <begin position="202"/>
        <end position="223"/>
    </location>
</feature>
<feature type="modified residue" description="Phosphoserine" evidence="1">
    <location>
        <position position="43"/>
    </location>
</feature>
<feature type="sequence variant" id="VAR_030216" description="In dbSNP:rs7093840." evidence="3">
    <original>E</original>
    <variation>D</variation>
    <location>
        <position position="121"/>
    </location>
</feature>
<protein>
    <recommendedName>
        <fullName>Uncharacterized protein C10orf62</fullName>
    </recommendedName>
</protein>
<gene>
    <name type="primary">C10orf62</name>
</gene>
<accession>Q5T681</accession>
<accession>Q49A70</accession>
<accession>Q8N3Y6</accession>
<reference key="1">
    <citation type="journal article" date="2004" name="Nature">
        <title>The DNA sequence and comparative analysis of human chromosome 10.</title>
        <authorList>
            <person name="Deloukas P."/>
            <person name="Earthrowl M.E."/>
            <person name="Grafham D.V."/>
            <person name="Rubenfield M."/>
            <person name="French L."/>
            <person name="Steward C.A."/>
            <person name="Sims S.K."/>
            <person name="Jones M.C."/>
            <person name="Searle S."/>
            <person name="Scott C."/>
            <person name="Howe K."/>
            <person name="Hunt S.E."/>
            <person name="Andrews T.D."/>
            <person name="Gilbert J.G.R."/>
            <person name="Swarbreck D."/>
            <person name="Ashurst J.L."/>
            <person name="Taylor A."/>
            <person name="Battles J."/>
            <person name="Bird C.P."/>
            <person name="Ainscough R."/>
            <person name="Almeida J.P."/>
            <person name="Ashwell R.I.S."/>
            <person name="Ambrose K.D."/>
            <person name="Babbage A.K."/>
            <person name="Bagguley C.L."/>
            <person name="Bailey J."/>
            <person name="Banerjee R."/>
            <person name="Bates K."/>
            <person name="Beasley H."/>
            <person name="Bray-Allen S."/>
            <person name="Brown A.J."/>
            <person name="Brown J.Y."/>
            <person name="Burford D.C."/>
            <person name="Burrill W."/>
            <person name="Burton J."/>
            <person name="Cahill P."/>
            <person name="Camire D."/>
            <person name="Carter N.P."/>
            <person name="Chapman J.C."/>
            <person name="Clark S.Y."/>
            <person name="Clarke G."/>
            <person name="Clee C.M."/>
            <person name="Clegg S."/>
            <person name="Corby N."/>
            <person name="Coulson A."/>
            <person name="Dhami P."/>
            <person name="Dutta I."/>
            <person name="Dunn M."/>
            <person name="Faulkner L."/>
            <person name="Frankish A."/>
            <person name="Frankland J.A."/>
            <person name="Garner P."/>
            <person name="Garnett J."/>
            <person name="Gribble S."/>
            <person name="Griffiths C."/>
            <person name="Grocock R."/>
            <person name="Gustafson E."/>
            <person name="Hammond S."/>
            <person name="Harley J.L."/>
            <person name="Hart E."/>
            <person name="Heath P.D."/>
            <person name="Ho T.P."/>
            <person name="Hopkins B."/>
            <person name="Horne J."/>
            <person name="Howden P.J."/>
            <person name="Huckle E."/>
            <person name="Hynds C."/>
            <person name="Johnson C."/>
            <person name="Johnson D."/>
            <person name="Kana A."/>
            <person name="Kay M."/>
            <person name="Kimberley A.M."/>
            <person name="Kershaw J.K."/>
            <person name="Kokkinaki M."/>
            <person name="Laird G.K."/>
            <person name="Lawlor S."/>
            <person name="Lee H.M."/>
            <person name="Leongamornlert D.A."/>
            <person name="Laird G."/>
            <person name="Lloyd C."/>
            <person name="Lloyd D.M."/>
            <person name="Loveland J."/>
            <person name="Lovell J."/>
            <person name="McLaren S."/>
            <person name="McLay K.E."/>
            <person name="McMurray A."/>
            <person name="Mashreghi-Mohammadi M."/>
            <person name="Matthews L."/>
            <person name="Milne S."/>
            <person name="Nickerson T."/>
            <person name="Nguyen M."/>
            <person name="Overton-Larty E."/>
            <person name="Palmer S.A."/>
            <person name="Pearce A.V."/>
            <person name="Peck A.I."/>
            <person name="Pelan S."/>
            <person name="Phillimore B."/>
            <person name="Porter K."/>
            <person name="Rice C.M."/>
            <person name="Rogosin A."/>
            <person name="Ross M.T."/>
            <person name="Sarafidou T."/>
            <person name="Sehra H.K."/>
            <person name="Shownkeen R."/>
            <person name="Skuce C.D."/>
            <person name="Smith M."/>
            <person name="Standring L."/>
            <person name="Sycamore N."/>
            <person name="Tester J."/>
            <person name="Thorpe A."/>
            <person name="Torcasso W."/>
            <person name="Tracey A."/>
            <person name="Tromans A."/>
            <person name="Tsolas J."/>
            <person name="Wall M."/>
            <person name="Walsh J."/>
            <person name="Wang H."/>
            <person name="Weinstock K."/>
            <person name="West A.P."/>
            <person name="Willey D.L."/>
            <person name="Whitehead S.L."/>
            <person name="Wilming L."/>
            <person name="Wray P.W."/>
            <person name="Young L."/>
            <person name="Chen Y."/>
            <person name="Lovering R.C."/>
            <person name="Moschonas N.K."/>
            <person name="Siebert R."/>
            <person name="Fechtel K."/>
            <person name="Bentley D."/>
            <person name="Durbin R.M."/>
            <person name="Hubbard T."/>
            <person name="Doucette-Stamm L."/>
            <person name="Beck S."/>
            <person name="Smith D.R."/>
            <person name="Rogers J."/>
        </authorList>
    </citation>
    <scope>NUCLEOTIDE SEQUENCE [LARGE SCALE GENOMIC DNA]</scope>
</reference>
<reference key="2">
    <citation type="journal article" date="2004" name="Genome Res.">
        <title>The status, quality, and expansion of the NIH full-length cDNA project: the Mammalian Gene Collection (MGC).</title>
        <authorList>
            <consortium name="The MGC Project Team"/>
        </authorList>
    </citation>
    <scope>NUCLEOTIDE SEQUENCE [LARGE SCALE MRNA]</scope>
    <scope>VARIANT ASP-121</scope>
    <source>
        <tissue>Brain</tissue>
    </source>
</reference>
<name>CJ062_HUMAN</name>
<sequence>MLWVQRKRRRKETSECPSDKDKSPESHKAKNESWIKSHFSRLSEEKLALDNNASASGNATQTESGSEEVSSTVHIETFTTRHGEVGSALHRESFTSRQKTSGPSVIQEIHQESGKAPSTDEATWAAVAACTKEIDTQGRHLAHSMLQRAIAYQHSGHLESKDINQEELRALEEVEMKLQKNFLTQRENTIAGANHTHTFYGHSHHSHHGHPSHQSHSLPNRRH</sequence>
<organism>
    <name type="scientific">Homo sapiens</name>
    <name type="common">Human</name>
    <dbReference type="NCBI Taxonomy" id="9606"/>
    <lineage>
        <taxon>Eukaryota</taxon>
        <taxon>Metazoa</taxon>
        <taxon>Chordata</taxon>
        <taxon>Craniata</taxon>
        <taxon>Vertebrata</taxon>
        <taxon>Euteleostomi</taxon>
        <taxon>Mammalia</taxon>
        <taxon>Eutheria</taxon>
        <taxon>Euarchontoglires</taxon>
        <taxon>Primates</taxon>
        <taxon>Haplorrhini</taxon>
        <taxon>Catarrhini</taxon>
        <taxon>Hominidae</taxon>
        <taxon>Homo</taxon>
    </lineage>
</organism>
<evidence type="ECO:0000250" key="1">
    <source>
        <dbReference type="UniProtKB" id="Q6AYN3"/>
    </source>
</evidence>
<evidence type="ECO:0000256" key="2">
    <source>
        <dbReference type="SAM" id="MobiDB-lite"/>
    </source>
</evidence>
<evidence type="ECO:0000269" key="3">
    <source>
    </source>
</evidence>
<dbReference type="EMBL" id="AL355315">
    <property type="status" value="NOT_ANNOTATED_CDS"/>
    <property type="molecule type" value="Genomic_DNA"/>
</dbReference>
<dbReference type="EMBL" id="BC037252">
    <property type="protein sequence ID" value="AAH37252.1"/>
    <property type="molecule type" value="mRNA"/>
</dbReference>
<dbReference type="CCDS" id="CCDS31261.1"/>
<dbReference type="RefSeq" id="NP_001009997.2">
    <property type="nucleotide sequence ID" value="NM_001009997.3"/>
</dbReference>
<dbReference type="SMR" id="Q5T681"/>
<dbReference type="BioGRID" id="135946">
    <property type="interactions" value="14"/>
</dbReference>
<dbReference type="FunCoup" id="Q5T681">
    <property type="interactions" value="3"/>
</dbReference>
<dbReference type="IntAct" id="Q5T681">
    <property type="interactions" value="12"/>
</dbReference>
<dbReference type="STRING" id="9606.ENSP00000359674"/>
<dbReference type="iPTMnet" id="Q5T681"/>
<dbReference type="PhosphoSitePlus" id="Q5T681"/>
<dbReference type="BioMuta" id="C10orf62"/>
<dbReference type="MassIVE" id="Q5T681"/>
<dbReference type="PaxDb" id="9606-ENSP00000359674"/>
<dbReference type="PeptideAtlas" id="Q5T681"/>
<dbReference type="ProteomicsDB" id="64570"/>
<dbReference type="Antibodypedia" id="52145">
    <property type="antibodies" value="64 antibodies from 11 providers"/>
</dbReference>
<dbReference type="DNASU" id="414157"/>
<dbReference type="Ensembl" id="ENST00000370640.5">
    <property type="protein sequence ID" value="ENSP00000359674.3"/>
    <property type="gene ID" value="ENSG00000203942.5"/>
</dbReference>
<dbReference type="GeneID" id="414157"/>
<dbReference type="KEGG" id="hsa:414157"/>
<dbReference type="MANE-Select" id="ENST00000370640.5">
    <property type="protein sequence ID" value="ENSP00000359674.3"/>
    <property type="RefSeq nucleotide sequence ID" value="NM_001009997.3"/>
    <property type="RefSeq protein sequence ID" value="NP_001009997.2"/>
</dbReference>
<dbReference type="UCSC" id="uc001koa.4">
    <property type="organism name" value="human"/>
</dbReference>
<dbReference type="AGR" id="HGNC:23294"/>
<dbReference type="CTD" id="414157"/>
<dbReference type="GeneCards" id="C10orf62"/>
<dbReference type="HGNC" id="HGNC:23294">
    <property type="gene designation" value="C10orf62"/>
</dbReference>
<dbReference type="HPA" id="ENSG00000203942">
    <property type="expression patterns" value="Tissue enriched (testis)"/>
</dbReference>
<dbReference type="neXtProt" id="NX_Q5T681"/>
<dbReference type="OpenTargets" id="ENSG00000203942"/>
<dbReference type="PharmGKB" id="PA134924151"/>
<dbReference type="VEuPathDB" id="HostDB:ENSG00000203942"/>
<dbReference type="eggNOG" id="ENOG502SSB3">
    <property type="taxonomic scope" value="Eukaryota"/>
</dbReference>
<dbReference type="GeneTree" id="ENSGT00390000015820"/>
<dbReference type="HOGENOM" id="CLU_079655_0_0_1"/>
<dbReference type="InParanoid" id="Q5T681"/>
<dbReference type="OMA" id="AKNENWI"/>
<dbReference type="OrthoDB" id="9450232at2759"/>
<dbReference type="PAN-GO" id="Q5T681">
    <property type="GO annotations" value="0 GO annotations based on evolutionary models"/>
</dbReference>
<dbReference type="PhylomeDB" id="Q5T681"/>
<dbReference type="TreeFam" id="TF353569"/>
<dbReference type="PathwayCommons" id="Q5T681"/>
<dbReference type="SignaLink" id="Q5T681"/>
<dbReference type="BioGRID-ORCS" id="414157">
    <property type="hits" value="8 hits in 1111 CRISPR screens"/>
</dbReference>
<dbReference type="GenomeRNAi" id="414157"/>
<dbReference type="Pharos" id="Q5T681">
    <property type="development level" value="Tdark"/>
</dbReference>
<dbReference type="PRO" id="PR:Q5T681"/>
<dbReference type="Proteomes" id="UP000005640">
    <property type="component" value="Chromosome 10"/>
</dbReference>
<dbReference type="RNAct" id="Q5T681">
    <property type="molecule type" value="protein"/>
</dbReference>
<dbReference type="Bgee" id="ENSG00000203942">
    <property type="expression patterns" value="Expressed in left testis and 81 other cell types or tissues"/>
</dbReference>
<dbReference type="InterPro" id="IPR037649">
    <property type="entry name" value="C10orf62"/>
</dbReference>
<dbReference type="PANTHER" id="PTHR23008:SF0">
    <property type="entry name" value="CHROMOSOME 10 OPEN READING FRAME 62"/>
    <property type="match status" value="1"/>
</dbReference>
<dbReference type="PANTHER" id="PTHR23008">
    <property type="entry name" value="CHROMOSOME 28 C10ORF62 HOMOLOG"/>
    <property type="match status" value="1"/>
</dbReference>
<dbReference type="Pfam" id="PF17729">
    <property type="entry name" value="DUF5569"/>
    <property type="match status" value="1"/>
</dbReference>
<proteinExistence type="evidence at protein level"/>
<keyword id="KW-0597">Phosphoprotein</keyword>
<keyword id="KW-1267">Proteomics identification</keyword>
<keyword id="KW-1185">Reference proteome</keyword>